<evidence type="ECO:0000255" key="1">
    <source>
        <dbReference type="HAMAP-Rule" id="MF_00558"/>
    </source>
</evidence>
<dbReference type="EC" id="6.2.1.5" evidence="1"/>
<dbReference type="EMBL" id="CP000733">
    <property type="protein sequence ID" value="ABS77209.1"/>
    <property type="molecule type" value="Genomic_DNA"/>
</dbReference>
<dbReference type="RefSeq" id="WP_011996646.1">
    <property type="nucleotide sequence ID" value="NC_009727.1"/>
</dbReference>
<dbReference type="SMR" id="A9KBQ4"/>
<dbReference type="KEGG" id="cbd:CBUD_0597"/>
<dbReference type="HOGENOM" id="CLU_037430_0_2_6"/>
<dbReference type="UniPathway" id="UPA00223">
    <property type="reaction ID" value="UER00999"/>
</dbReference>
<dbReference type="Proteomes" id="UP000008555">
    <property type="component" value="Chromosome"/>
</dbReference>
<dbReference type="GO" id="GO:0005829">
    <property type="term" value="C:cytosol"/>
    <property type="evidence" value="ECO:0007669"/>
    <property type="project" value="TreeGrafter"/>
</dbReference>
<dbReference type="GO" id="GO:0042709">
    <property type="term" value="C:succinate-CoA ligase complex"/>
    <property type="evidence" value="ECO:0007669"/>
    <property type="project" value="TreeGrafter"/>
</dbReference>
<dbReference type="GO" id="GO:0005524">
    <property type="term" value="F:ATP binding"/>
    <property type="evidence" value="ECO:0007669"/>
    <property type="project" value="UniProtKB-UniRule"/>
</dbReference>
<dbReference type="GO" id="GO:0000287">
    <property type="term" value="F:magnesium ion binding"/>
    <property type="evidence" value="ECO:0007669"/>
    <property type="project" value="UniProtKB-UniRule"/>
</dbReference>
<dbReference type="GO" id="GO:0004775">
    <property type="term" value="F:succinate-CoA ligase (ADP-forming) activity"/>
    <property type="evidence" value="ECO:0007669"/>
    <property type="project" value="UniProtKB-UniRule"/>
</dbReference>
<dbReference type="GO" id="GO:0004776">
    <property type="term" value="F:succinate-CoA ligase (GDP-forming) activity"/>
    <property type="evidence" value="ECO:0007669"/>
    <property type="project" value="RHEA"/>
</dbReference>
<dbReference type="GO" id="GO:0006104">
    <property type="term" value="P:succinyl-CoA metabolic process"/>
    <property type="evidence" value="ECO:0007669"/>
    <property type="project" value="TreeGrafter"/>
</dbReference>
<dbReference type="GO" id="GO:0006099">
    <property type="term" value="P:tricarboxylic acid cycle"/>
    <property type="evidence" value="ECO:0007669"/>
    <property type="project" value="UniProtKB-UniRule"/>
</dbReference>
<dbReference type="FunFam" id="3.30.1490.20:FF:000002">
    <property type="entry name" value="Succinate--CoA ligase [ADP-forming] subunit beta"/>
    <property type="match status" value="1"/>
</dbReference>
<dbReference type="FunFam" id="3.30.470.20:FF:000002">
    <property type="entry name" value="Succinate--CoA ligase [ADP-forming] subunit beta"/>
    <property type="match status" value="1"/>
</dbReference>
<dbReference type="FunFam" id="3.40.50.261:FF:000001">
    <property type="entry name" value="Succinate--CoA ligase [ADP-forming] subunit beta"/>
    <property type="match status" value="1"/>
</dbReference>
<dbReference type="Gene3D" id="3.30.1490.20">
    <property type="entry name" value="ATP-grasp fold, A domain"/>
    <property type="match status" value="1"/>
</dbReference>
<dbReference type="Gene3D" id="3.30.470.20">
    <property type="entry name" value="ATP-grasp fold, B domain"/>
    <property type="match status" value="1"/>
</dbReference>
<dbReference type="Gene3D" id="3.40.50.261">
    <property type="entry name" value="Succinyl-CoA synthetase domains"/>
    <property type="match status" value="1"/>
</dbReference>
<dbReference type="HAMAP" id="MF_00558">
    <property type="entry name" value="Succ_CoA_beta"/>
    <property type="match status" value="1"/>
</dbReference>
<dbReference type="InterPro" id="IPR011761">
    <property type="entry name" value="ATP-grasp"/>
</dbReference>
<dbReference type="InterPro" id="IPR013650">
    <property type="entry name" value="ATP-grasp_succ-CoA_synth-type"/>
</dbReference>
<dbReference type="InterPro" id="IPR013815">
    <property type="entry name" value="ATP_grasp_subdomain_1"/>
</dbReference>
<dbReference type="InterPro" id="IPR017866">
    <property type="entry name" value="Succ-CoA_synthase_bsu_CS"/>
</dbReference>
<dbReference type="InterPro" id="IPR005811">
    <property type="entry name" value="SUCC_ACL_C"/>
</dbReference>
<dbReference type="InterPro" id="IPR005809">
    <property type="entry name" value="Succ_CoA_ligase-like_bsu"/>
</dbReference>
<dbReference type="InterPro" id="IPR016102">
    <property type="entry name" value="Succinyl-CoA_synth-like"/>
</dbReference>
<dbReference type="NCBIfam" id="NF001913">
    <property type="entry name" value="PRK00696.1"/>
    <property type="match status" value="1"/>
</dbReference>
<dbReference type="NCBIfam" id="TIGR01016">
    <property type="entry name" value="sucCoAbeta"/>
    <property type="match status" value="1"/>
</dbReference>
<dbReference type="PANTHER" id="PTHR11815:SF10">
    <property type="entry name" value="SUCCINATE--COA LIGASE [GDP-FORMING] SUBUNIT BETA, MITOCHONDRIAL"/>
    <property type="match status" value="1"/>
</dbReference>
<dbReference type="PANTHER" id="PTHR11815">
    <property type="entry name" value="SUCCINYL-COA SYNTHETASE BETA CHAIN"/>
    <property type="match status" value="1"/>
</dbReference>
<dbReference type="Pfam" id="PF08442">
    <property type="entry name" value="ATP-grasp_2"/>
    <property type="match status" value="1"/>
</dbReference>
<dbReference type="Pfam" id="PF00549">
    <property type="entry name" value="Ligase_CoA"/>
    <property type="match status" value="1"/>
</dbReference>
<dbReference type="PIRSF" id="PIRSF001554">
    <property type="entry name" value="SucCS_beta"/>
    <property type="match status" value="1"/>
</dbReference>
<dbReference type="SUPFAM" id="SSF56059">
    <property type="entry name" value="Glutathione synthetase ATP-binding domain-like"/>
    <property type="match status" value="1"/>
</dbReference>
<dbReference type="SUPFAM" id="SSF52210">
    <property type="entry name" value="Succinyl-CoA synthetase domains"/>
    <property type="match status" value="1"/>
</dbReference>
<dbReference type="PROSITE" id="PS50975">
    <property type="entry name" value="ATP_GRASP"/>
    <property type="match status" value="1"/>
</dbReference>
<dbReference type="PROSITE" id="PS01217">
    <property type="entry name" value="SUCCINYL_COA_LIG_3"/>
    <property type="match status" value="1"/>
</dbReference>
<gene>
    <name evidence="1" type="primary">sucC</name>
    <name type="ordered locus">CBUD_0597</name>
</gene>
<proteinExistence type="inferred from homology"/>
<reference key="1">
    <citation type="journal article" date="2009" name="Infect. Immun.">
        <title>Comparative genomics reveal extensive transposon-mediated genomic plasticity and diversity among potential effector proteins within the genus Coxiella.</title>
        <authorList>
            <person name="Beare P.A."/>
            <person name="Unsworth N."/>
            <person name="Andoh M."/>
            <person name="Voth D.E."/>
            <person name="Omsland A."/>
            <person name="Gilk S.D."/>
            <person name="Williams K.P."/>
            <person name="Sobral B.W."/>
            <person name="Kupko J.J. III"/>
            <person name="Porcella S.F."/>
            <person name="Samuel J.E."/>
            <person name="Heinzen R.A."/>
        </authorList>
    </citation>
    <scope>NUCLEOTIDE SEQUENCE [LARGE SCALE GENOMIC DNA]</scope>
    <source>
        <strain>Dugway 5J108-111</strain>
    </source>
</reference>
<accession>A9KBQ4</accession>
<keyword id="KW-0067">ATP-binding</keyword>
<keyword id="KW-0436">Ligase</keyword>
<keyword id="KW-0460">Magnesium</keyword>
<keyword id="KW-0479">Metal-binding</keyword>
<keyword id="KW-0547">Nucleotide-binding</keyword>
<keyword id="KW-0816">Tricarboxylic acid cycle</keyword>
<organism>
    <name type="scientific">Coxiella burnetii (strain Dugway 5J108-111)</name>
    <dbReference type="NCBI Taxonomy" id="434922"/>
    <lineage>
        <taxon>Bacteria</taxon>
        <taxon>Pseudomonadati</taxon>
        <taxon>Pseudomonadota</taxon>
        <taxon>Gammaproteobacteria</taxon>
        <taxon>Legionellales</taxon>
        <taxon>Coxiellaceae</taxon>
        <taxon>Coxiella</taxon>
    </lineage>
</organism>
<comment type="function">
    <text evidence="1">Succinyl-CoA synthetase functions in the citric acid cycle (TCA), coupling the hydrolysis of succinyl-CoA to the synthesis of either ATP or GTP and thus represents the only step of substrate-level phosphorylation in the TCA. The beta subunit provides nucleotide specificity of the enzyme and binds the substrate succinate, while the binding sites for coenzyme A and phosphate are found in the alpha subunit.</text>
</comment>
<comment type="catalytic activity">
    <reaction evidence="1">
        <text>succinate + ATP + CoA = succinyl-CoA + ADP + phosphate</text>
        <dbReference type="Rhea" id="RHEA:17661"/>
        <dbReference type="ChEBI" id="CHEBI:30031"/>
        <dbReference type="ChEBI" id="CHEBI:30616"/>
        <dbReference type="ChEBI" id="CHEBI:43474"/>
        <dbReference type="ChEBI" id="CHEBI:57287"/>
        <dbReference type="ChEBI" id="CHEBI:57292"/>
        <dbReference type="ChEBI" id="CHEBI:456216"/>
        <dbReference type="EC" id="6.2.1.5"/>
    </reaction>
    <physiologicalReaction direction="right-to-left" evidence="1">
        <dbReference type="Rhea" id="RHEA:17663"/>
    </physiologicalReaction>
</comment>
<comment type="catalytic activity">
    <reaction evidence="1">
        <text>GTP + succinate + CoA = succinyl-CoA + GDP + phosphate</text>
        <dbReference type="Rhea" id="RHEA:22120"/>
        <dbReference type="ChEBI" id="CHEBI:30031"/>
        <dbReference type="ChEBI" id="CHEBI:37565"/>
        <dbReference type="ChEBI" id="CHEBI:43474"/>
        <dbReference type="ChEBI" id="CHEBI:57287"/>
        <dbReference type="ChEBI" id="CHEBI:57292"/>
        <dbReference type="ChEBI" id="CHEBI:58189"/>
    </reaction>
    <physiologicalReaction direction="right-to-left" evidence="1">
        <dbReference type="Rhea" id="RHEA:22122"/>
    </physiologicalReaction>
</comment>
<comment type="cofactor">
    <cofactor evidence="1">
        <name>Mg(2+)</name>
        <dbReference type="ChEBI" id="CHEBI:18420"/>
    </cofactor>
    <text evidence="1">Binds 1 Mg(2+) ion per subunit.</text>
</comment>
<comment type="pathway">
    <text evidence="1">Carbohydrate metabolism; tricarboxylic acid cycle; succinate from succinyl-CoA (ligase route): step 1/1.</text>
</comment>
<comment type="subunit">
    <text evidence="1">Heterotetramer of two alpha and two beta subunits.</text>
</comment>
<comment type="similarity">
    <text evidence="1">Belongs to the succinate/malate CoA ligase beta subunit family.</text>
</comment>
<name>SUCC_COXBN</name>
<protein>
    <recommendedName>
        <fullName evidence="1">Succinate--CoA ligase [ADP-forming] subunit beta</fullName>
        <ecNumber evidence="1">6.2.1.5</ecNumber>
    </recommendedName>
    <alternativeName>
        <fullName evidence="1">Succinyl-CoA synthetase subunit beta</fullName>
        <shortName evidence="1">SCS-beta</shortName>
    </alternativeName>
</protein>
<feature type="chain" id="PRO_1000082067" description="Succinate--CoA ligase [ADP-forming] subunit beta">
    <location>
        <begin position="1"/>
        <end position="390"/>
    </location>
</feature>
<feature type="domain" description="ATP-grasp" evidence="1">
    <location>
        <begin position="9"/>
        <end position="245"/>
    </location>
</feature>
<feature type="binding site" evidence="1">
    <location>
        <position position="46"/>
    </location>
    <ligand>
        <name>ATP</name>
        <dbReference type="ChEBI" id="CHEBI:30616"/>
    </ligand>
</feature>
<feature type="binding site" evidence="1">
    <location>
        <begin position="53"/>
        <end position="55"/>
    </location>
    <ligand>
        <name>ATP</name>
        <dbReference type="ChEBI" id="CHEBI:30616"/>
    </ligand>
</feature>
<feature type="binding site" evidence="1">
    <location>
        <position position="99"/>
    </location>
    <ligand>
        <name>ATP</name>
        <dbReference type="ChEBI" id="CHEBI:30616"/>
    </ligand>
</feature>
<feature type="binding site" evidence="1">
    <location>
        <position position="102"/>
    </location>
    <ligand>
        <name>ATP</name>
        <dbReference type="ChEBI" id="CHEBI:30616"/>
    </ligand>
</feature>
<feature type="binding site" evidence="1">
    <location>
        <position position="107"/>
    </location>
    <ligand>
        <name>ATP</name>
        <dbReference type="ChEBI" id="CHEBI:30616"/>
    </ligand>
</feature>
<feature type="binding site" evidence="1">
    <location>
        <position position="200"/>
    </location>
    <ligand>
        <name>Mg(2+)</name>
        <dbReference type="ChEBI" id="CHEBI:18420"/>
    </ligand>
</feature>
<feature type="binding site" evidence="1">
    <location>
        <position position="214"/>
    </location>
    <ligand>
        <name>Mg(2+)</name>
        <dbReference type="ChEBI" id="CHEBI:18420"/>
    </ligand>
</feature>
<feature type="binding site" evidence="1">
    <location>
        <position position="265"/>
    </location>
    <ligand>
        <name>substrate</name>
        <note>ligand shared with subunit alpha</note>
    </ligand>
</feature>
<feature type="binding site" evidence="1">
    <location>
        <begin position="322"/>
        <end position="324"/>
    </location>
    <ligand>
        <name>substrate</name>
        <note>ligand shared with subunit alpha</note>
    </ligand>
</feature>
<sequence>MNLHEYQSKHLLKKYNIPVPASEVVFNPDAAVDAAAKIGGDRWVVKAQVHAGGRGKAGGVRLVKNKEELKSAVKALLGTRLVTYQTDERGQPVNQILVEQTSDIARELYLGAVIDRASQRIVFMASTEGGVEIEKVAEKSPEKILKVTVDPAIGLQPFQCRQLFFGLGLQDLKQMRSFTDIVMGLYRLFTERDLSLLEINPLVITGSGELICLDAKINIDDSALYRQSELREMRDTTQEDEHETMAQQWELNYIKLDGNIGCMVNGAGLAMATMDLIKLSGGDPANFLDVGGSATKERVTEAFRIIVSDKNVKGILVNIFGGIVRCDLIADGIISAVKEVGIDVPVVVRLEGNNAQLGAKKLADSSMNIIAAKGFADAAEQIVKQVGVIA</sequence>